<sequence>MYKRPGHKHLSISIIMDTNTPSVLTVLASWGWNCASSSPATQCLERSTQGCLREGPSAQGCDYCEPVNVENGPPTTFVKNQDHAKNQEYTHFDTLFMVSSIDELGRRQLTDTIRRDLRHSLAKFTIACTKTSSFSSSYATRKGRKKKGPRTQPSNKSLQMFILCRRAHAKHIRAQLQAVIQARKPRKYYTRAIDGSTHPVVPVFVYEFAAIDTVSLHRDNVIVDSSGS</sequence>
<reference key="1">
    <citation type="journal article" date="2000" name="J. Virol.">
        <title>The genome of a very virulent Marek's disease virus.</title>
        <authorList>
            <person name="Tulman E.R."/>
            <person name="Afonso C.L."/>
            <person name="Lu Z."/>
            <person name="Zsak L."/>
            <person name="Rock D.L."/>
            <person name="Kutish G.F."/>
        </authorList>
    </citation>
    <scope>NUCLEOTIDE SEQUENCE [LARGE SCALE GENOMIC DNA]</scope>
</reference>
<feature type="chain" id="PRO_0000406583" description="Nuclear phosphoprotein UL3 homolog">
    <location>
        <begin position="1"/>
        <end position="228"/>
    </location>
</feature>
<gene>
    <name type="primary">MDV015</name>
</gene>
<keyword id="KW-1048">Host nucleus</keyword>
<keyword id="KW-0597">Phosphoprotein</keyword>
<keyword id="KW-1185">Reference proteome</keyword>
<protein>
    <recommendedName>
        <fullName>Nuclear phosphoprotein UL3 homolog</fullName>
    </recommendedName>
</protein>
<organismHost>
    <name type="scientific">Gallus gallus</name>
    <name type="common">Chicken</name>
    <dbReference type="NCBI Taxonomy" id="9031"/>
</organismHost>
<organism>
    <name type="scientific">Gallid herpesvirus 2 (strain Chicken/Md5/ATCC VR-987)</name>
    <name type="common">GaHV-2</name>
    <name type="synonym">Marek's disease herpesvirus type 1</name>
    <dbReference type="NCBI Taxonomy" id="10389"/>
    <lineage>
        <taxon>Viruses</taxon>
        <taxon>Duplodnaviria</taxon>
        <taxon>Heunggongvirae</taxon>
        <taxon>Peploviricota</taxon>
        <taxon>Herviviricetes</taxon>
        <taxon>Herpesvirales</taxon>
        <taxon>Orthoherpesviridae</taxon>
        <taxon>Alphaherpesvirinae</taxon>
        <taxon>Mardivirus</taxon>
        <taxon>Mardivirus gallidalpha2</taxon>
        <taxon>Gallid alphaherpesvirus 2</taxon>
    </lineage>
</organism>
<dbReference type="EMBL" id="AF243438">
    <property type="protein sequence ID" value="AAG14195.1"/>
    <property type="molecule type" value="Genomic_DNA"/>
</dbReference>
<dbReference type="Proteomes" id="UP000008072">
    <property type="component" value="Segment"/>
</dbReference>
<dbReference type="GO" id="GO:0042025">
    <property type="term" value="C:host cell nucleus"/>
    <property type="evidence" value="ECO:0007669"/>
    <property type="project" value="UniProtKB-SubCell"/>
</dbReference>
<dbReference type="InterPro" id="IPR005035">
    <property type="entry name" value="Herpes_UL3"/>
</dbReference>
<dbReference type="Pfam" id="PF03369">
    <property type="entry name" value="Herpes_UL3"/>
    <property type="match status" value="1"/>
</dbReference>
<name>NP03_GAHVM</name>
<accession>Q77MS7</accession>
<comment type="subcellular location">
    <subcellularLocation>
        <location evidence="1">Host nucleus</location>
    </subcellularLocation>
</comment>
<comment type="PTM">
    <text evidence="1">Phosphorylated.</text>
</comment>
<comment type="similarity">
    <text evidence="2">Belongs to the alphaherpesvirinae HHV-1 UL3 family.</text>
</comment>
<proteinExistence type="inferred from homology"/>
<evidence type="ECO:0000250" key="1"/>
<evidence type="ECO:0000305" key="2"/>